<organism>
    <name type="scientific">Haloferax volcanii (strain ATCC 29605 / DSM 3757 / JCM 8879 / NBRC 14742 / NCIMB 2012 / VKM B-1768 / DS2)</name>
    <name type="common">Halobacterium volcanii</name>
    <dbReference type="NCBI Taxonomy" id="309800"/>
    <lineage>
        <taxon>Archaea</taxon>
        <taxon>Methanobacteriati</taxon>
        <taxon>Methanobacteriota</taxon>
        <taxon>Stenosarchaea group</taxon>
        <taxon>Halobacteria</taxon>
        <taxon>Halobacteriales</taxon>
        <taxon>Haloferacaceae</taxon>
        <taxon>Haloferax</taxon>
    </lineage>
</organism>
<name>6PGD_HALVD</name>
<evidence type="ECO:0000250" key="1">
    <source>
        <dbReference type="UniProtKB" id="P00349"/>
    </source>
</evidence>
<evidence type="ECO:0000255" key="2">
    <source>
        <dbReference type="HAMAP-Rule" id="MF_02047"/>
    </source>
</evidence>
<evidence type="ECO:0000269" key="3">
    <source>
    </source>
</evidence>
<evidence type="ECO:0000303" key="4">
    <source>
    </source>
</evidence>
<evidence type="ECO:0000305" key="5"/>
<evidence type="ECO:0000312" key="6">
    <source>
        <dbReference type="EMBL" id="ADE04956.1"/>
    </source>
</evidence>
<evidence type="ECO:0000312" key="7">
    <source>
        <dbReference type="EMBL" id="ELY35096.1"/>
    </source>
</evidence>
<sequence length="299" mass="31983">MQLGVIGLGRMGRIVVDRVLDAGHEVVAFDLSAEAVAAAADAGAEPADSVADLVDRLGDDKRIWLMVPAGDAVDATLDDLDPHLDGDDVVVDGGNSHFEESVRRAEACSAAYLDCGTSGGPAGAELGFSLMVGGPQWAYDELTPVFDAVATGPDGHGHMGDSGSGHYVKMVHNGVEYALMQAYGEGFELLAEGRYDLDLESVAKTWNNGAVIRSWLLELCEEAFREEGSDLGDVDDHVAGGSTGTWTVQEALEQEVPVPLIYQSLAERFGSRADDRFSRRLANRLRYGFGRHEVARKDD</sequence>
<feature type="chain" id="PRO_0000434434" description="6-phosphogluconate dehydrogenase, NAD(+)-dependent, decarboxylating">
    <location>
        <begin position="1"/>
        <end position="299"/>
    </location>
</feature>
<feature type="active site" description="Proton acceptor" evidence="1 2">
    <location>
        <position position="169"/>
    </location>
</feature>
<feature type="active site" description="Proton donor" evidence="1 2">
    <location>
        <position position="176"/>
    </location>
</feature>
<feature type="binding site" evidence="1 2">
    <location>
        <begin position="7"/>
        <end position="12"/>
    </location>
    <ligand>
        <name>NAD(+)</name>
        <dbReference type="ChEBI" id="CHEBI:57540"/>
    </ligand>
</feature>
<feature type="binding site" evidence="1 2">
    <location>
        <begin position="67"/>
        <end position="69"/>
    </location>
    <ligand>
        <name>NAD(+)</name>
        <dbReference type="ChEBI" id="CHEBI:57540"/>
    </ligand>
</feature>
<feature type="binding site" evidence="1 2">
    <location>
        <position position="95"/>
    </location>
    <ligand>
        <name>NAD(+)</name>
        <dbReference type="ChEBI" id="CHEBI:57540"/>
    </ligand>
</feature>
<feature type="binding site" evidence="1 2">
    <location>
        <position position="95"/>
    </location>
    <ligand>
        <name>substrate</name>
    </ligand>
</feature>
<feature type="binding site" evidence="1 2">
    <location>
        <position position="118"/>
    </location>
    <ligand>
        <name>substrate</name>
    </ligand>
</feature>
<feature type="binding site" evidence="1 2">
    <location>
        <position position="120"/>
    </location>
    <ligand>
        <name>substrate</name>
    </ligand>
</feature>
<feature type="binding site" evidence="1 2">
    <location>
        <begin position="172"/>
        <end position="173"/>
    </location>
    <ligand>
        <name>substrate</name>
    </ligand>
</feature>
<feature type="binding site" evidence="1 2">
    <location>
        <position position="177"/>
    </location>
    <ligand>
        <name>substrate</name>
    </ligand>
</feature>
<feature type="binding site" evidence="1 2">
    <location>
        <position position="268"/>
    </location>
    <ligand>
        <name>substrate</name>
    </ligand>
</feature>
<gene>
    <name evidence="4" type="primary">gndA</name>
    <name evidence="6" type="ordered locus">HVO_1830</name>
    <name evidence="7" type="ORF">C498_04458</name>
</gene>
<keyword id="KW-0311">Gluconate utilization</keyword>
<keyword id="KW-0520">NAD</keyword>
<keyword id="KW-0560">Oxidoreductase</keyword>
<keyword id="KW-1185">Reference proteome</keyword>
<comment type="function">
    <text evidence="3">Catalyzes the oxidative decarboxylation of 6-phosphogluconate to ribulose 5-phosphate and CO(2), with concomitant reduction of NAD to NADH.</text>
</comment>
<comment type="catalytic activity">
    <reaction evidence="3">
        <text>6-phospho-D-gluconate + NAD(+) = D-ribulose 5-phosphate + CO2 + NADH</text>
        <dbReference type="Rhea" id="RHEA:33023"/>
        <dbReference type="ChEBI" id="CHEBI:16526"/>
        <dbReference type="ChEBI" id="CHEBI:57540"/>
        <dbReference type="ChEBI" id="CHEBI:57945"/>
        <dbReference type="ChEBI" id="CHEBI:58121"/>
        <dbReference type="ChEBI" id="CHEBI:58759"/>
        <dbReference type="EC" id="1.1.1.343"/>
    </reaction>
</comment>
<comment type="biophysicochemical properties">
    <kinetics>
        <KM evidence="3">0.021 mM for 6-phosphogluconate</KM>
        <KM evidence="3">0.033 mM for NAD(+)</KM>
        <KM evidence="3">2.94 mM for NADP(+)</KM>
        <Vmax evidence="3">10.0 umol/min/mg enzyme (with NAD(+) as electron acceptor)</Vmax>
        <Vmax evidence="3">0.42 umol/min/mg enzyme (with NADP(+) as electron acceptor)</Vmax>
        <text evidence="3">The catalytic efficiency with NAD(+) is about 2000-fold higher than with NADP(+), indicating that NAD(+) is the physiological electron acceptor.</text>
    </kinetics>
    <phDependence>
        <text evidence="3">Optimum pH is 10.5.</text>
    </phDependence>
</comment>
<comment type="pathway">
    <text evidence="3">Carbohydrate degradation; pentose phosphate pathway.</text>
</comment>
<comment type="subunit">
    <text evidence="3">Homotetramer.</text>
</comment>
<comment type="disruption phenotype">
    <text evidence="3">Deletion mutants do not grow on glucose.</text>
</comment>
<comment type="similarity">
    <text evidence="5">Belongs to the 6-phosphogluconate dehydrogenase family.</text>
</comment>
<reference key="1">
    <citation type="journal article" date="2010" name="PLoS ONE">
        <title>The complete genome sequence of Haloferax volcanii DS2, a model archaeon.</title>
        <authorList>
            <person name="Hartman A.L."/>
            <person name="Norais C."/>
            <person name="Badger J.H."/>
            <person name="Delmas S."/>
            <person name="Haldenby S."/>
            <person name="Madupu R."/>
            <person name="Robinson J."/>
            <person name="Khouri H."/>
            <person name="Ren Q."/>
            <person name="Lowe T.M."/>
            <person name="Maupin-Furlow J."/>
            <person name="Pohlschroder M."/>
            <person name="Daniels C."/>
            <person name="Pfeiffer F."/>
            <person name="Allers T."/>
            <person name="Eisen J.A."/>
        </authorList>
    </citation>
    <scope>NUCLEOTIDE SEQUENCE [LARGE SCALE GENOMIC DNA]</scope>
    <source>
        <strain>ATCC 29605 / DSM 3757 / JCM 8879 / NBRC 14742 / NCIMB 2012 / VKM B-1768 / DS2</strain>
    </source>
</reference>
<reference key="2">
    <citation type="journal article" date="2014" name="PLoS Genet.">
        <title>Phylogenetically driven sequencing of extremely halophilic archaea reveals strategies for static and dynamic osmo-response.</title>
        <authorList>
            <person name="Becker E.A."/>
            <person name="Seitzer P.M."/>
            <person name="Tritt A."/>
            <person name="Larsen D."/>
            <person name="Krusor M."/>
            <person name="Yao A.I."/>
            <person name="Wu D."/>
            <person name="Madern D."/>
            <person name="Eisen J.A."/>
            <person name="Darling A.E."/>
            <person name="Facciotti M.T."/>
        </authorList>
    </citation>
    <scope>NUCLEOTIDE SEQUENCE [LARGE SCALE GENOMIC DNA]</scope>
    <source>
        <strain>ATCC 29605 / DSM 3757 / JCM 8879 / NBRC 14742 / NCIMB 2012 / VKM B-1768 / DS2</strain>
    </source>
</reference>
<reference key="3">
    <citation type="journal article" date="2015" name="FEBS Lett.">
        <title>The oxidative pentose phosphate pathway in the haloarchaeon Haloferax volcanii involves a novel type of glucose-6-phosphate dehydrogenase -- The archaeal Zwischenferment.</title>
        <authorList>
            <person name="Pickl A."/>
            <person name="Schoenheit P."/>
        </authorList>
    </citation>
    <scope>FUNCTION</scope>
    <scope>CATALYTIC ACTIVITY</scope>
    <scope>BIOPHYSICOCHEMICAL PROPERTIES</scope>
    <scope>PATHWAY</scope>
    <scope>SUBUNIT</scope>
    <scope>DISRUPTION PHENOTYPE</scope>
    <source>
        <strain>DS2 / DS70 / H26</strain>
    </source>
</reference>
<accession>D4GST8</accession>
<proteinExistence type="evidence at protein level"/>
<dbReference type="EC" id="1.1.1.343" evidence="3"/>
<dbReference type="EMBL" id="CP001956">
    <property type="protein sequence ID" value="ADE04956.1"/>
    <property type="molecule type" value="Genomic_DNA"/>
</dbReference>
<dbReference type="EMBL" id="AOHU01000034">
    <property type="protein sequence ID" value="ELY35096.1"/>
    <property type="molecule type" value="Genomic_DNA"/>
</dbReference>
<dbReference type="RefSeq" id="WP_004041720.1">
    <property type="nucleotide sequence ID" value="NC_013967.1"/>
</dbReference>
<dbReference type="SMR" id="D4GST8"/>
<dbReference type="STRING" id="309800.HVO_1830"/>
<dbReference type="PaxDb" id="309800-C498_04458"/>
<dbReference type="EnsemblBacteria" id="ADE04956">
    <property type="protein sequence ID" value="ADE04956"/>
    <property type="gene ID" value="HVO_1830"/>
</dbReference>
<dbReference type="GeneID" id="8925721"/>
<dbReference type="KEGG" id="hvo:HVO_1830"/>
<dbReference type="PATRIC" id="fig|309800.29.peg.868"/>
<dbReference type="eggNOG" id="arCOG00248">
    <property type="taxonomic scope" value="Archaea"/>
</dbReference>
<dbReference type="HOGENOM" id="CLU_024540_0_0_2"/>
<dbReference type="OrthoDB" id="23890at2157"/>
<dbReference type="BRENDA" id="1.1.1.343">
    <property type="organism ID" value="2561"/>
</dbReference>
<dbReference type="UniPathway" id="UPA00115"/>
<dbReference type="Proteomes" id="UP000008243">
    <property type="component" value="Chromosome"/>
</dbReference>
<dbReference type="Proteomes" id="UP000011532">
    <property type="component" value="Unassembled WGS sequence"/>
</dbReference>
<dbReference type="GO" id="GO:0070403">
    <property type="term" value="F:NAD+ binding"/>
    <property type="evidence" value="ECO:0007669"/>
    <property type="project" value="InterPro"/>
</dbReference>
<dbReference type="GO" id="GO:0050661">
    <property type="term" value="F:NADP binding"/>
    <property type="evidence" value="ECO:0007669"/>
    <property type="project" value="InterPro"/>
</dbReference>
<dbReference type="GO" id="GO:0004616">
    <property type="term" value="F:phosphogluconate dehydrogenase (decarboxylating) activity"/>
    <property type="evidence" value="ECO:0007669"/>
    <property type="project" value="InterPro"/>
</dbReference>
<dbReference type="GO" id="GO:0019521">
    <property type="term" value="P:D-gluconate metabolic process"/>
    <property type="evidence" value="ECO:0007669"/>
    <property type="project" value="UniProtKB-KW"/>
</dbReference>
<dbReference type="GO" id="GO:0009051">
    <property type="term" value="P:pentose-phosphate shunt, oxidative branch"/>
    <property type="evidence" value="ECO:0007669"/>
    <property type="project" value="UniProtKB-UniRule"/>
</dbReference>
<dbReference type="Gene3D" id="1.10.1040.10">
    <property type="entry name" value="N-(1-d-carboxylethyl)-l-norvaline Dehydrogenase, domain 2"/>
    <property type="match status" value="1"/>
</dbReference>
<dbReference type="Gene3D" id="3.40.50.720">
    <property type="entry name" value="NAD(P)-binding Rossmann-like Domain"/>
    <property type="match status" value="1"/>
</dbReference>
<dbReference type="HAMAP" id="MF_02047">
    <property type="entry name" value="6PGDH_archaea"/>
    <property type="match status" value="1"/>
</dbReference>
<dbReference type="InterPro" id="IPR008927">
    <property type="entry name" value="6-PGluconate_DH-like_C_sf"/>
</dbReference>
<dbReference type="InterPro" id="IPR004849">
    <property type="entry name" value="6DGDH_YqeC"/>
</dbReference>
<dbReference type="InterPro" id="IPR013328">
    <property type="entry name" value="6PGD_dom2"/>
</dbReference>
<dbReference type="InterPro" id="IPR032883">
    <property type="entry name" value="6PGDH_archaea"/>
</dbReference>
<dbReference type="InterPro" id="IPR006114">
    <property type="entry name" value="6PGDH_C"/>
</dbReference>
<dbReference type="InterPro" id="IPR006115">
    <property type="entry name" value="6PGDH_NADP-bd"/>
</dbReference>
<dbReference type="InterPro" id="IPR036291">
    <property type="entry name" value="NAD(P)-bd_dom_sf"/>
</dbReference>
<dbReference type="InterPro" id="IPR006183">
    <property type="entry name" value="Pgluconate_DH"/>
</dbReference>
<dbReference type="NCBIfam" id="TIGR00872">
    <property type="entry name" value="gnd_rel"/>
    <property type="match status" value="1"/>
</dbReference>
<dbReference type="NCBIfam" id="NF007161">
    <property type="entry name" value="PRK09599.1"/>
    <property type="match status" value="1"/>
</dbReference>
<dbReference type="PANTHER" id="PTHR11811">
    <property type="entry name" value="6-PHOSPHOGLUCONATE DEHYDROGENASE"/>
    <property type="match status" value="1"/>
</dbReference>
<dbReference type="Pfam" id="PF00393">
    <property type="entry name" value="6PGD"/>
    <property type="match status" value="1"/>
</dbReference>
<dbReference type="Pfam" id="PF03446">
    <property type="entry name" value="NAD_binding_2"/>
    <property type="match status" value="1"/>
</dbReference>
<dbReference type="PRINTS" id="PR00076">
    <property type="entry name" value="6PGDHDRGNASE"/>
</dbReference>
<dbReference type="SMART" id="SM01350">
    <property type="entry name" value="6PGD"/>
    <property type="match status" value="1"/>
</dbReference>
<dbReference type="SUPFAM" id="SSF48179">
    <property type="entry name" value="6-phosphogluconate dehydrogenase C-terminal domain-like"/>
    <property type="match status" value="1"/>
</dbReference>
<dbReference type="SUPFAM" id="SSF51735">
    <property type="entry name" value="NAD(P)-binding Rossmann-fold domains"/>
    <property type="match status" value="1"/>
</dbReference>
<protein>
    <recommendedName>
        <fullName evidence="5">6-phosphogluconate dehydrogenase, NAD(+)-dependent, decarboxylating</fullName>
        <shortName evidence="4">6PGDH</shortName>
        <ecNumber evidence="3">1.1.1.343</ecNumber>
    </recommendedName>
</protein>